<protein>
    <recommendedName>
        <fullName evidence="8">Melanotransferrin</fullName>
    </recommendedName>
    <alternativeName>
        <fullName>Melanoma-associated antigen p97</fullName>
    </alternativeName>
    <cdAntigenName>CD228</cdAntigenName>
</protein>
<proteinExistence type="evidence at protein level"/>
<evidence type="ECO:0000255" key="1"/>
<evidence type="ECO:0000255" key="2">
    <source>
        <dbReference type="PROSITE-ProRule" id="PRU00741"/>
    </source>
</evidence>
<evidence type="ECO:0000269" key="3">
    <source>
    </source>
</evidence>
<evidence type="ECO:0000269" key="4">
    <source>
    </source>
</evidence>
<evidence type="ECO:0000269" key="5">
    <source>
    </source>
</evidence>
<evidence type="ECO:0000303" key="6">
    <source>
    </source>
</evidence>
<evidence type="ECO:0000305" key="7"/>
<evidence type="ECO:0000312" key="8">
    <source>
        <dbReference type="HGNC" id="HGNC:7037"/>
    </source>
</evidence>
<evidence type="ECO:0007829" key="9">
    <source>
        <dbReference type="PDB" id="6XR0"/>
    </source>
</evidence>
<name>TRFM_HUMAN</name>
<comment type="function">
    <text evidence="5">Involved in iron cellular uptake. Seems to be internalized and then recycled back to the cell membrane. Binds a single atom of iron per subunit. Could also bind zinc.</text>
</comment>
<comment type="interaction">
    <interactant intactId="EBI-7172128">
        <id>P08582</id>
    </interactant>
    <interactant intactId="EBI-349854">
        <id>P13569</id>
        <label>CFTR</label>
    </interactant>
    <organismsDiffer>false</organismsDiffer>
    <experiments>7</experiments>
</comment>
<comment type="interaction">
    <interactant intactId="EBI-10195914">
        <id>P08582-2</id>
    </interactant>
    <interactant intactId="EBI-3867333">
        <id>A8MQ03</id>
        <label>CYSRT1</label>
    </interactant>
    <organismsDiffer>false</organismsDiffer>
    <experiments>3</experiments>
</comment>
<comment type="interaction">
    <interactant intactId="EBI-10195914">
        <id>P08582-2</id>
    </interactant>
    <interactant intactId="EBI-10187349">
        <id>O60760</id>
        <label>HPGDS</label>
    </interactant>
    <organismsDiffer>false</organismsDiffer>
    <experiments>3</experiments>
</comment>
<comment type="interaction">
    <interactant intactId="EBI-10195914">
        <id>P08582-2</id>
    </interactant>
    <interactant intactId="EBI-11959885">
        <id>Q07627</id>
        <label>KRTAP1-1</label>
    </interactant>
    <organismsDiffer>false</organismsDiffer>
    <experiments>3</experiments>
</comment>
<comment type="interaction">
    <interactant intactId="EBI-10195914">
        <id>P08582-2</id>
    </interactant>
    <interactant intactId="EBI-10171774">
        <id>P60410</id>
        <label>KRTAP10-8</label>
    </interactant>
    <organismsDiffer>false</organismsDiffer>
    <experiments>3</experiments>
</comment>
<comment type="interaction">
    <interactant intactId="EBI-10195914">
        <id>P08582-2</id>
    </interactant>
    <interactant intactId="EBI-6165891">
        <id>Q14696</id>
        <label>MESD</label>
    </interactant>
    <organismsDiffer>false</organismsDiffer>
    <experiments>3</experiments>
</comment>
<comment type="interaction">
    <interactant intactId="EBI-10195914">
        <id>P08582-2</id>
    </interactant>
    <interactant intactId="EBI-945833">
        <id>Q7Z3S9</id>
        <label>NOTCH2NLA</label>
    </interactant>
    <organismsDiffer>false</organismsDiffer>
    <experiments>3</experiments>
</comment>
<comment type="interaction">
    <interactant intactId="EBI-10195914">
        <id>P08582-2</id>
    </interactant>
    <interactant intactId="EBI-22310682">
        <id>P0DPK4</id>
        <label>NOTCH2NLC</label>
    </interactant>
    <organismsDiffer>false</organismsDiffer>
    <experiments>3</experiments>
</comment>
<comment type="subcellular location">
    <molecule>Isoform 1</molecule>
    <subcellularLocation>
        <location>Cell membrane</location>
        <topology>Lipid-anchor</topology>
        <topology>GPI-anchor</topology>
    </subcellularLocation>
</comment>
<comment type="alternative products">
    <event type="alternative splicing"/>
    <isoform>
        <id>P08582-1</id>
        <name>1</name>
        <sequence type="displayed"/>
    </isoform>
    <isoform>
        <id>P08582-2</id>
        <name>2</name>
        <sequence type="described" ref="VSP_006557 VSP_006558"/>
    </isoform>
</comment>
<comment type="tissue specificity">
    <text>Found predominantly in human melanomas and in certain fetal tissues; also found in liver, epithelium, umbilical chord, placenta and sweat gland ducts.</text>
</comment>
<comment type="similarity">
    <text evidence="2">Belongs to the transferrin family.</text>
</comment>
<organism>
    <name type="scientific">Homo sapiens</name>
    <name type="common">Human</name>
    <dbReference type="NCBI Taxonomy" id="9606"/>
    <lineage>
        <taxon>Eukaryota</taxon>
        <taxon>Metazoa</taxon>
        <taxon>Chordata</taxon>
        <taxon>Craniata</taxon>
        <taxon>Vertebrata</taxon>
        <taxon>Euteleostomi</taxon>
        <taxon>Mammalia</taxon>
        <taxon>Eutheria</taxon>
        <taxon>Euarchontoglires</taxon>
        <taxon>Primates</taxon>
        <taxon>Haplorrhini</taxon>
        <taxon>Catarrhini</taxon>
        <taxon>Hominidae</taxon>
        <taxon>Homo</taxon>
    </lineage>
</organism>
<gene>
    <name evidence="8" type="primary">MELTF</name>
    <name type="synonym">MAP97</name>
    <name type="synonym">MFI2</name>
</gene>
<reference key="1">
    <citation type="journal article" date="1986" name="Proc. Natl. Acad. Sci. U.S.A.">
        <title>Primary structure of the human melanoma-associated antigen p97 (melanotransferrin) deduced from the mRNA sequence.</title>
        <authorList>
            <person name="Rose T.M."/>
            <person name="Plowman G.D."/>
            <person name="Teplow D.B."/>
            <person name="Dreyer W.J."/>
            <person name="Hellstroem K.E."/>
            <person name="Brown J.P."/>
        </authorList>
    </citation>
    <scope>NUCLEOTIDE SEQUENCE [MRNA] (ISOFORM 1)</scope>
    <source>
        <tissue>Melanoma</tissue>
    </source>
</reference>
<reference key="2">
    <citation type="journal article" date="2006" name="Nature">
        <title>The DNA sequence, annotation and analysis of human chromosome 3.</title>
        <authorList>
            <person name="Muzny D.M."/>
            <person name="Scherer S.E."/>
            <person name="Kaul R."/>
            <person name="Wang J."/>
            <person name="Yu J."/>
            <person name="Sudbrak R."/>
            <person name="Buhay C.J."/>
            <person name="Chen R."/>
            <person name="Cree A."/>
            <person name="Ding Y."/>
            <person name="Dugan-Rocha S."/>
            <person name="Gill R."/>
            <person name="Gunaratne P."/>
            <person name="Harris R.A."/>
            <person name="Hawes A.C."/>
            <person name="Hernandez J."/>
            <person name="Hodgson A.V."/>
            <person name="Hume J."/>
            <person name="Jackson A."/>
            <person name="Khan Z.M."/>
            <person name="Kovar-Smith C."/>
            <person name="Lewis L.R."/>
            <person name="Lozado R.J."/>
            <person name="Metzker M.L."/>
            <person name="Milosavljevic A."/>
            <person name="Miner G.R."/>
            <person name="Morgan M.B."/>
            <person name="Nazareth L.V."/>
            <person name="Scott G."/>
            <person name="Sodergren E."/>
            <person name="Song X.-Z."/>
            <person name="Steffen D."/>
            <person name="Wei S."/>
            <person name="Wheeler D.A."/>
            <person name="Wright M.W."/>
            <person name="Worley K.C."/>
            <person name="Yuan Y."/>
            <person name="Zhang Z."/>
            <person name="Adams C.Q."/>
            <person name="Ansari-Lari M.A."/>
            <person name="Ayele M."/>
            <person name="Brown M.J."/>
            <person name="Chen G."/>
            <person name="Chen Z."/>
            <person name="Clendenning J."/>
            <person name="Clerc-Blankenburg K.P."/>
            <person name="Chen R."/>
            <person name="Chen Z."/>
            <person name="Davis C."/>
            <person name="Delgado O."/>
            <person name="Dinh H.H."/>
            <person name="Dong W."/>
            <person name="Draper H."/>
            <person name="Ernst S."/>
            <person name="Fu G."/>
            <person name="Gonzalez-Garay M.L."/>
            <person name="Garcia D.K."/>
            <person name="Gillett W."/>
            <person name="Gu J."/>
            <person name="Hao B."/>
            <person name="Haugen E."/>
            <person name="Havlak P."/>
            <person name="He X."/>
            <person name="Hennig S."/>
            <person name="Hu S."/>
            <person name="Huang W."/>
            <person name="Jackson L.R."/>
            <person name="Jacob L.S."/>
            <person name="Kelly S.H."/>
            <person name="Kube M."/>
            <person name="Levy R."/>
            <person name="Li Z."/>
            <person name="Liu B."/>
            <person name="Liu J."/>
            <person name="Liu W."/>
            <person name="Lu J."/>
            <person name="Maheshwari M."/>
            <person name="Nguyen B.-V."/>
            <person name="Okwuonu G.O."/>
            <person name="Palmeiri A."/>
            <person name="Pasternak S."/>
            <person name="Perez L.M."/>
            <person name="Phelps K.A."/>
            <person name="Plopper F.J."/>
            <person name="Qiang B."/>
            <person name="Raymond C."/>
            <person name="Rodriguez R."/>
            <person name="Saenphimmachak C."/>
            <person name="Santibanez J."/>
            <person name="Shen H."/>
            <person name="Shen Y."/>
            <person name="Subramanian S."/>
            <person name="Tabor P.E."/>
            <person name="Verduzco D."/>
            <person name="Waldron L."/>
            <person name="Wang J."/>
            <person name="Wang J."/>
            <person name="Wang Q."/>
            <person name="Williams G.A."/>
            <person name="Wong G.K.-S."/>
            <person name="Yao Z."/>
            <person name="Zhang J."/>
            <person name="Zhang X."/>
            <person name="Zhao G."/>
            <person name="Zhou J."/>
            <person name="Zhou Y."/>
            <person name="Nelson D."/>
            <person name="Lehrach H."/>
            <person name="Reinhardt R."/>
            <person name="Naylor S.L."/>
            <person name="Yang H."/>
            <person name="Olson M."/>
            <person name="Weinstock G."/>
            <person name="Gibbs R.A."/>
        </authorList>
    </citation>
    <scope>NUCLEOTIDE SEQUENCE [LARGE SCALE GENOMIC DNA]</scope>
</reference>
<reference key="3">
    <citation type="journal article" date="2004" name="Genome Res.">
        <title>The status, quality, and expansion of the NIH full-length cDNA project: the Mammalian Gene Collection (MGC).</title>
        <authorList>
            <consortium name="The MGC Project Team"/>
        </authorList>
    </citation>
    <scope>NUCLEOTIDE SEQUENCE [LARGE SCALE MRNA] (ISOFORM 2)</scope>
    <source>
        <tissue>Skin</tissue>
        <tissue>Uterus</tissue>
    </source>
</reference>
<reference key="4">
    <citation type="journal article" date="1989" name="J. Exp. Med.">
        <title>A unique antigenic epitope of human melanoma is carried on the common melanoma glycoprotein gp95/p97.</title>
        <authorList>
            <person name="Furukawa K.S."/>
            <person name="Furukawa K."/>
            <person name="Real F.X."/>
            <person name="Old L.J."/>
            <person name="Lloyd K.O."/>
        </authorList>
    </citation>
    <scope>PROTEIN SEQUENCE OF 20-30</scope>
</reference>
<reference key="5">
    <citation type="journal article" date="1994" name="J. Biol. Chem.">
        <title>Transport and expression in human melanomas of a transferrin-like glycosylphosphatidylinositol-anchored protein.</title>
        <authorList>
            <person name="Food M.R."/>
            <person name="Rothenberger S."/>
            <person name="Gabathuler R."/>
            <person name="Haidl I.D."/>
            <person name="Reid G."/>
            <person name="Jefferies W.A."/>
        </authorList>
    </citation>
    <scope>GPI-ANCHOR</scope>
</reference>
<reference key="6">
    <citation type="journal article" date="1995" name="EMBO J.">
        <title>A novel iron uptake mechanism mediated by GPI-anchored human p97.</title>
        <authorList>
            <person name="Kennard M.L."/>
            <person name="Richardson D.R."/>
            <person name="Gabathuler R."/>
            <person name="Ponka P."/>
            <person name="Jefferies W.A."/>
        </authorList>
    </citation>
    <scope>FUNCTION</scope>
</reference>
<reference key="7">
    <citation type="journal article" date="1992" name="FEBS Lett.">
        <title>Human melanotransferrin (p97) has only one functional iron-binding site.</title>
        <authorList>
            <person name="Baker E.N."/>
            <person name="Baker H.M."/>
            <person name="Smith C.A."/>
            <person name="Stebbins M.R."/>
            <person name="Kahn M."/>
            <person name="Hellstroem K.E."/>
            <person name="Hellstroem I."/>
        </authorList>
    </citation>
    <scope>IRON-BINDING</scope>
</reference>
<reference key="8">
    <citation type="journal article" date="2014" name="J. Proteomics">
        <title>An enzyme assisted RP-RPLC approach for in-depth analysis of human liver phosphoproteome.</title>
        <authorList>
            <person name="Bian Y."/>
            <person name="Song C."/>
            <person name="Cheng K."/>
            <person name="Dong M."/>
            <person name="Wang F."/>
            <person name="Huang J."/>
            <person name="Sun D."/>
            <person name="Wang L."/>
            <person name="Ye M."/>
            <person name="Zou H."/>
        </authorList>
    </citation>
    <scope>IDENTIFICATION BY MASS SPECTROMETRY [LARGE SCALE ANALYSIS]</scope>
    <source>
        <tissue>Liver</tissue>
    </source>
</reference>
<reference key="9">
    <citation type="journal article" date="2015" name="Cell">
        <title>A single kinase generates the majority of the secreted phosphoproteome.</title>
        <authorList>
            <person name="Tagliabracci V.S."/>
            <person name="Wiley S.E."/>
            <person name="Guo X."/>
            <person name="Kinch L.N."/>
            <person name="Durrant E."/>
            <person name="Wen J."/>
            <person name="Xiao J."/>
            <person name="Cui J."/>
            <person name="Nguyen K.B."/>
            <person name="Engel J.L."/>
            <person name="Coon J.J."/>
            <person name="Grishin N."/>
            <person name="Pinna L.A."/>
            <person name="Pagliarini D.J."/>
            <person name="Dixon J.E."/>
        </authorList>
    </citation>
    <scope>PHOSPHORYLATION AT SER-462</scope>
</reference>
<reference key="10">
    <citation type="journal article" date="1992" name="FEBS Lett.">
        <title>A molecular model for the tumour-associated antigen, p97, suggests a Zn-binding function.</title>
        <authorList>
            <person name="Garrat R.C."/>
            <person name="Jhoti H."/>
        </authorList>
    </citation>
    <scope>3D-STRUCTURE MODELING</scope>
</reference>
<keyword id="KW-0002">3D-structure</keyword>
<keyword id="KW-0025">Alternative splicing</keyword>
<keyword id="KW-1003">Cell membrane</keyword>
<keyword id="KW-0903">Direct protein sequencing</keyword>
<keyword id="KW-1015">Disulfide bond</keyword>
<keyword id="KW-0325">Glycoprotein</keyword>
<keyword id="KW-0336">GPI-anchor</keyword>
<keyword id="KW-0406">Ion transport</keyword>
<keyword id="KW-0408">Iron</keyword>
<keyword id="KW-0410">Iron transport</keyword>
<keyword id="KW-0449">Lipoprotein</keyword>
<keyword id="KW-0472">Membrane</keyword>
<keyword id="KW-0479">Metal-binding</keyword>
<keyword id="KW-0597">Phosphoprotein</keyword>
<keyword id="KW-1267">Proteomics identification</keyword>
<keyword id="KW-1185">Reference proteome</keyword>
<keyword id="KW-0677">Repeat</keyword>
<keyword id="KW-0732">Signal</keyword>
<keyword id="KW-0813">Transport</keyword>
<keyword id="KW-0862">Zinc</keyword>
<accession>P08582</accession>
<accession>Q9BQE2</accession>
<feature type="signal peptide" evidence="3">
    <location>
        <begin position="1"/>
        <end position="19"/>
    </location>
</feature>
<feature type="chain" id="PRO_0000035739" description="Melanotransferrin" evidence="1">
    <location>
        <begin position="20"/>
        <end position="709"/>
    </location>
</feature>
<feature type="propeptide" id="PRO_0000035740" description="Removed in mature form" evidence="1">
    <location>
        <begin position="710"/>
        <end position="738"/>
    </location>
</feature>
<feature type="domain" description="Transferrin-like 1" evidence="2">
    <location>
        <begin position="23"/>
        <end position="357"/>
    </location>
</feature>
<feature type="domain" description="Transferrin-like 2" evidence="2">
    <location>
        <begin position="366"/>
        <end position="706"/>
    </location>
</feature>
<feature type="region of interest" description="Antigenic epitope">
    <location>
        <begin position="20"/>
        <end position="30"/>
    </location>
</feature>
<feature type="binding site" evidence="2">
    <location>
        <position position="78"/>
    </location>
    <ligand>
        <name>Fe(3+)</name>
        <dbReference type="ChEBI" id="CHEBI:29034"/>
        <label>1</label>
    </ligand>
</feature>
<feature type="binding site" evidence="2">
    <location>
        <position position="107"/>
    </location>
    <ligand>
        <name>Fe(3+)</name>
        <dbReference type="ChEBI" id="CHEBI:29034"/>
        <label>1</label>
    </ligand>
</feature>
<feature type="binding site" evidence="2">
    <location>
        <position position="132"/>
    </location>
    <ligand>
        <name>hydrogencarbonate</name>
        <dbReference type="ChEBI" id="CHEBI:17544"/>
        <label>1</label>
    </ligand>
</feature>
<feature type="binding site" evidence="2">
    <location>
        <position position="136"/>
    </location>
    <ligand>
        <name>hydrogencarbonate</name>
        <dbReference type="ChEBI" id="CHEBI:17544"/>
        <label>1</label>
    </ligand>
</feature>
<feature type="binding site" evidence="2">
    <location>
        <position position="138"/>
    </location>
    <ligand>
        <name>hydrogencarbonate</name>
        <dbReference type="ChEBI" id="CHEBI:17544"/>
        <label>1</label>
    </ligand>
</feature>
<feature type="binding site" evidence="2">
    <location>
        <position position="139"/>
    </location>
    <ligand>
        <name>hydrogencarbonate</name>
        <dbReference type="ChEBI" id="CHEBI:17544"/>
        <label>1</label>
    </ligand>
</feature>
<feature type="binding site" evidence="2">
    <location>
        <position position="210"/>
    </location>
    <ligand>
        <name>Fe(3+)</name>
        <dbReference type="ChEBI" id="CHEBI:29034"/>
        <label>1</label>
    </ligand>
</feature>
<feature type="binding site" evidence="2">
    <location>
        <position position="279"/>
    </location>
    <ligand>
        <name>Fe(3+)</name>
        <dbReference type="ChEBI" id="CHEBI:29034"/>
        <label>1</label>
    </ligand>
</feature>
<feature type="binding site" evidence="2">
    <location>
        <position position="421"/>
    </location>
    <ligand>
        <name>Fe(3+)</name>
        <dbReference type="ChEBI" id="CHEBI:29034"/>
        <label>2</label>
    </ligand>
</feature>
<feature type="binding site" evidence="2">
    <location>
        <position position="451"/>
    </location>
    <ligand>
        <name>Fe(3+)</name>
        <dbReference type="ChEBI" id="CHEBI:29034"/>
        <label>2</label>
    </ligand>
</feature>
<feature type="binding site" evidence="2">
    <location>
        <position position="556"/>
    </location>
    <ligand>
        <name>Fe(3+)</name>
        <dbReference type="ChEBI" id="CHEBI:29034"/>
        <label>2</label>
    </ligand>
</feature>
<feature type="binding site" evidence="2">
    <location>
        <position position="625"/>
    </location>
    <ligand>
        <name>Fe(3+)</name>
        <dbReference type="ChEBI" id="CHEBI:29034"/>
        <label>2</label>
    </ligand>
</feature>
<feature type="modified residue" description="Phosphoserine; by FAM20C" evidence="4">
    <location>
        <position position="462"/>
    </location>
</feature>
<feature type="lipid moiety-binding region" description="GPI-anchor amidated cysteine" evidence="1">
    <location>
        <position position="709"/>
    </location>
</feature>
<feature type="glycosylation site" description="N-linked (GlcNAc...) asparagine" evidence="1">
    <location>
        <position position="38"/>
    </location>
</feature>
<feature type="glycosylation site" description="N-linked (GlcNAc...) asparagine" evidence="1">
    <location>
        <position position="135"/>
    </location>
</feature>
<feature type="glycosylation site" description="N-linked (GlcNAc...) asparagine" evidence="1">
    <location>
        <position position="515"/>
    </location>
</feature>
<feature type="disulfide bond" evidence="2">
    <location>
        <begin position="26"/>
        <end position="63"/>
    </location>
</feature>
<feature type="disulfide bond" evidence="2">
    <location>
        <begin position="36"/>
        <end position="54"/>
    </location>
</feature>
<feature type="disulfide bond" evidence="2">
    <location>
        <begin position="130"/>
        <end position="216"/>
    </location>
</feature>
<feature type="disulfide bond" evidence="2">
    <location>
        <begin position="172"/>
        <end position="189"/>
    </location>
</feature>
<feature type="disulfide bond" evidence="2">
    <location>
        <begin position="186"/>
        <end position="199"/>
    </location>
</feature>
<feature type="disulfide bond" evidence="2">
    <location>
        <begin position="257"/>
        <end position="271"/>
    </location>
</feature>
<feature type="splice variant" id="VSP_006557" description="In isoform 2." evidence="6">
    <original>GKTLPSWGQALLSQDFELLCRDGSRADVTEWRQCHLARVPAHAVVVRADTDGGLIFRLLNEGQRL</original>
    <variation>ESPSRRQTWTRSEEEEGECPAHEEARRTMRSSAGQAWKWAPVHRPQDESDKGEFGKRAKSRDMLG</variation>
    <location>
        <begin position="238"/>
        <end position="302"/>
    </location>
</feature>
<feature type="splice variant" id="VSP_006558" description="In isoform 2." evidence="6">
    <location>
        <begin position="303"/>
        <end position="738"/>
    </location>
</feature>
<feature type="sequence variant" id="VAR_020413" description="In dbSNP:rs2276790.">
    <original>R</original>
    <variation>W</variation>
    <location>
        <position position="294"/>
    </location>
</feature>
<feature type="sequence variant" id="VAR_057304" description="In dbSNP:rs17129219.">
    <original>A</original>
    <variation>T</variation>
    <location>
        <position position="559"/>
    </location>
</feature>
<feature type="sequence conflict" description="In Ref. 1; AAA59992." evidence="7" ref="1">
    <original>T</original>
    <variation>K</variation>
    <location>
        <position position="431"/>
    </location>
</feature>
<feature type="strand" evidence="9">
    <location>
        <begin position="23"/>
        <end position="29"/>
    </location>
</feature>
<feature type="helix" evidence="9">
    <location>
        <begin position="30"/>
        <end position="45"/>
    </location>
</feature>
<feature type="strand" evidence="9">
    <location>
        <begin position="52"/>
        <end position="56"/>
    </location>
</feature>
<feature type="helix" evidence="9">
    <location>
        <begin position="60"/>
        <end position="68"/>
    </location>
</feature>
<feature type="strand" evidence="9">
    <location>
        <begin position="74"/>
        <end position="77"/>
    </location>
</feature>
<feature type="helix" evidence="9">
    <location>
        <begin position="79"/>
        <end position="87"/>
    </location>
</feature>
<feature type="strand" evidence="9">
    <location>
        <begin position="91"/>
        <end position="98"/>
    </location>
</feature>
<feature type="turn" evidence="9">
    <location>
        <begin position="101"/>
        <end position="103"/>
    </location>
</feature>
<feature type="strand" evidence="9">
    <location>
        <begin position="105"/>
        <end position="116"/>
    </location>
</feature>
<feature type="strand" evidence="9">
    <location>
        <begin position="129"/>
        <end position="132"/>
    </location>
</feature>
<feature type="turn" evidence="9">
    <location>
        <begin position="137"/>
        <end position="140"/>
    </location>
</feature>
<feature type="helix" evidence="9">
    <location>
        <begin position="141"/>
        <end position="150"/>
    </location>
</feature>
<feature type="helix" evidence="9">
    <location>
        <begin position="160"/>
        <end position="167"/>
    </location>
</feature>
<feature type="strand" evidence="9">
    <location>
        <begin position="168"/>
        <end position="172"/>
    </location>
</feature>
<feature type="helix" evidence="9">
    <location>
        <begin position="182"/>
        <end position="185"/>
    </location>
</feature>
<feature type="strand" evidence="9">
    <location>
        <begin position="186"/>
        <end position="188"/>
    </location>
</feature>
<feature type="strand" evidence="9">
    <location>
        <begin position="192"/>
        <end position="195"/>
    </location>
</feature>
<feature type="helix" evidence="9">
    <location>
        <begin position="209"/>
        <end position="218"/>
    </location>
</feature>
<feature type="strand" evidence="9">
    <location>
        <begin position="223"/>
        <end position="229"/>
    </location>
</feature>
<feature type="turn" evidence="9">
    <location>
        <begin position="230"/>
        <end position="232"/>
    </location>
</feature>
<feature type="helix" evidence="9">
    <location>
        <begin position="233"/>
        <end position="235"/>
    </location>
</feature>
<feature type="strand" evidence="9">
    <location>
        <begin position="244"/>
        <end position="246"/>
    </location>
</feature>
<feature type="helix" evidence="9">
    <location>
        <begin position="250"/>
        <end position="252"/>
    </location>
</feature>
<feature type="strand" evidence="9">
    <location>
        <begin position="253"/>
        <end position="255"/>
    </location>
</feature>
<feature type="turn" evidence="9">
    <location>
        <begin position="268"/>
        <end position="270"/>
    </location>
</feature>
<feature type="strand" evidence="9">
    <location>
        <begin position="273"/>
        <end position="277"/>
    </location>
</feature>
<feature type="strand" evidence="9">
    <location>
        <begin position="280"/>
        <end position="287"/>
    </location>
</feature>
<feature type="helix" evidence="9">
    <location>
        <begin position="290"/>
        <end position="302"/>
    </location>
</feature>
<feature type="helix" evidence="9">
    <location>
        <begin position="316"/>
        <end position="318"/>
    </location>
</feature>
<feature type="strand" evidence="9">
    <location>
        <begin position="320"/>
        <end position="322"/>
    </location>
</feature>
<feature type="strand" evidence="9">
    <location>
        <begin position="331"/>
        <end position="334"/>
    </location>
</feature>
<feature type="helix" evidence="9">
    <location>
        <begin position="340"/>
        <end position="343"/>
    </location>
</feature>
<feature type="helix" evidence="9">
    <location>
        <begin position="346"/>
        <end position="355"/>
    </location>
</feature>
<feature type="strand" evidence="9">
    <location>
        <begin position="364"/>
        <end position="370"/>
    </location>
</feature>
<feature type="helix" evidence="9">
    <location>
        <begin position="373"/>
        <end position="388"/>
    </location>
</feature>
<feature type="strand" evidence="9">
    <location>
        <begin position="392"/>
        <end position="399"/>
    </location>
</feature>
<feature type="helix" evidence="9">
    <location>
        <begin position="403"/>
        <end position="411"/>
    </location>
</feature>
<feature type="strand" evidence="9">
    <location>
        <begin position="417"/>
        <end position="420"/>
    </location>
</feature>
<feature type="helix" evidence="9">
    <location>
        <begin position="422"/>
        <end position="431"/>
    </location>
</feature>
<feature type="strand" evidence="9">
    <location>
        <begin position="435"/>
        <end position="442"/>
    </location>
</feature>
<feature type="strand" evidence="9">
    <location>
        <begin position="448"/>
        <end position="450"/>
    </location>
</feature>
<feature type="strand" evidence="9">
    <location>
        <begin position="452"/>
        <end position="458"/>
    </location>
</feature>
<feature type="strand" evidence="9">
    <location>
        <begin position="474"/>
        <end position="476"/>
    </location>
</feature>
<feature type="turn" evidence="9">
    <location>
        <begin position="483"/>
        <end position="486"/>
    </location>
</feature>
<feature type="helix" evidence="9">
    <location>
        <begin position="487"/>
        <end position="495"/>
    </location>
</feature>
<feature type="helix" evidence="9">
    <location>
        <begin position="506"/>
        <end position="513"/>
    </location>
</feature>
<feature type="strand" evidence="9">
    <location>
        <begin position="514"/>
        <end position="518"/>
    </location>
</feature>
<feature type="strand" evidence="9">
    <location>
        <begin position="521"/>
        <end position="523"/>
    </location>
</feature>
<feature type="helix" evidence="9">
    <location>
        <begin position="529"/>
        <end position="532"/>
    </location>
</feature>
<feature type="strand" evidence="9">
    <location>
        <begin position="546"/>
        <end position="548"/>
    </location>
</feature>
<feature type="helix" evidence="9">
    <location>
        <begin position="555"/>
        <end position="564"/>
    </location>
</feature>
<feature type="strand" evidence="9">
    <location>
        <begin position="569"/>
        <end position="574"/>
    </location>
</feature>
<feature type="helix" evidence="9">
    <location>
        <begin position="577"/>
        <end position="580"/>
    </location>
</feature>
<feature type="helix" evidence="9">
    <location>
        <begin position="589"/>
        <end position="592"/>
    </location>
</feature>
<feature type="helix" evidence="9">
    <location>
        <begin position="596"/>
        <end position="598"/>
    </location>
</feature>
<feature type="strand" evidence="9">
    <location>
        <begin position="599"/>
        <end position="602"/>
    </location>
</feature>
<feature type="strand" evidence="9">
    <location>
        <begin position="608"/>
        <end position="610"/>
    </location>
</feature>
<feature type="helix" evidence="9">
    <location>
        <begin position="611"/>
        <end position="616"/>
    </location>
</feature>
<feature type="strand" evidence="9">
    <location>
        <begin position="619"/>
        <end position="621"/>
    </location>
</feature>
<feature type="strand" evidence="9">
    <location>
        <begin position="626"/>
        <end position="629"/>
    </location>
</feature>
<feature type="helix" evidence="9">
    <location>
        <begin position="635"/>
        <end position="649"/>
    </location>
</feature>
<feature type="strand" evidence="9">
    <location>
        <begin position="655"/>
        <end position="657"/>
    </location>
</feature>
<feature type="turn" evidence="9">
    <location>
        <begin position="664"/>
        <end position="667"/>
    </location>
</feature>
<feature type="strand" evidence="9">
    <location>
        <begin position="668"/>
        <end position="670"/>
    </location>
</feature>
<feature type="strand" evidence="9">
    <location>
        <begin position="677"/>
        <end position="681"/>
    </location>
</feature>
<feature type="helix" evidence="9">
    <location>
        <begin position="689"/>
        <end position="693"/>
    </location>
</feature>
<feature type="helix" evidence="9">
    <location>
        <begin position="695"/>
        <end position="705"/>
    </location>
</feature>
<dbReference type="EMBL" id="M12154">
    <property type="protein sequence ID" value="AAA59992.1"/>
    <property type="molecule type" value="mRNA"/>
</dbReference>
<dbReference type="EMBL" id="AC068302">
    <property type="status" value="NOT_ANNOTATED_CDS"/>
    <property type="molecule type" value="Genomic_DNA"/>
</dbReference>
<dbReference type="EMBL" id="BC001875">
    <property type="protein sequence ID" value="AAH01875.1"/>
    <property type="molecule type" value="mRNA"/>
</dbReference>
<dbReference type="EMBL" id="BC002623">
    <property type="protein sequence ID" value="AAH02623.1"/>
    <property type="molecule type" value="mRNA"/>
</dbReference>
<dbReference type="EMBL" id="BC007550">
    <property type="protein sequence ID" value="AAH07550.1"/>
    <property type="molecule type" value="mRNA"/>
</dbReference>
<dbReference type="EMBL" id="BC071910">
    <property type="protein sequence ID" value="AAH71910.1"/>
    <property type="molecule type" value="mRNA"/>
</dbReference>
<dbReference type="CCDS" id="CCDS3325.1">
    <molecule id="P08582-1"/>
</dbReference>
<dbReference type="CCDS" id="CCDS3326.1">
    <molecule id="P08582-2"/>
</dbReference>
<dbReference type="PIR" id="A23814">
    <property type="entry name" value="TFHUM"/>
</dbReference>
<dbReference type="RefSeq" id="NP_005920.2">
    <molecule id="P08582-1"/>
    <property type="nucleotide sequence ID" value="NM_005929.6"/>
</dbReference>
<dbReference type="RefSeq" id="NP_201573.1">
    <molecule id="P08582-2"/>
    <property type="nucleotide sequence ID" value="NM_033316.4"/>
</dbReference>
<dbReference type="PDB" id="6XR0">
    <property type="method" value="X-ray"/>
    <property type="resolution" value="3.06 A"/>
    <property type="chains" value="M=1-738"/>
</dbReference>
<dbReference type="PDBsum" id="6XR0"/>
<dbReference type="SMR" id="P08582"/>
<dbReference type="BioGRID" id="110399">
    <property type="interactions" value="127"/>
</dbReference>
<dbReference type="FunCoup" id="P08582">
    <property type="interactions" value="377"/>
</dbReference>
<dbReference type="IntAct" id="P08582">
    <property type="interactions" value="57"/>
</dbReference>
<dbReference type="MINT" id="P08582"/>
<dbReference type="STRING" id="9606.ENSP00000296350"/>
<dbReference type="MEROPS" id="S60.973"/>
<dbReference type="MEROPS" id="S60.976"/>
<dbReference type="GlyConnect" id="1499">
    <property type="glycosylation" value="2 N-Linked glycans (2 sites)"/>
</dbReference>
<dbReference type="GlyCosmos" id="P08582">
    <property type="glycosylation" value="3 sites, 2 glycans"/>
</dbReference>
<dbReference type="GlyGen" id="P08582">
    <property type="glycosylation" value="3 sites, 13 N-linked glycans (3 sites)"/>
</dbReference>
<dbReference type="iPTMnet" id="P08582"/>
<dbReference type="PhosphoSitePlus" id="P08582"/>
<dbReference type="BioMuta" id="MELTF"/>
<dbReference type="DMDM" id="338817914"/>
<dbReference type="jPOST" id="P08582"/>
<dbReference type="MassIVE" id="P08582"/>
<dbReference type="PaxDb" id="9606-ENSP00000296350"/>
<dbReference type="PeptideAtlas" id="P08582"/>
<dbReference type="ProteomicsDB" id="52131">
    <molecule id="P08582-1"/>
</dbReference>
<dbReference type="ProteomicsDB" id="52132">
    <molecule id="P08582-2"/>
</dbReference>
<dbReference type="Pumba" id="P08582"/>
<dbReference type="Antibodypedia" id="1405">
    <property type="antibodies" value="374 antibodies from 35 providers"/>
</dbReference>
<dbReference type="DNASU" id="4241"/>
<dbReference type="Ensembl" id="ENST00000296350.10">
    <molecule id="P08582-1"/>
    <property type="protein sequence ID" value="ENSP00000296350.5"/>
    <property type="gene ID" value="ENSG00000163975.14"/>
</dbReference>
<dbReference type="Ensembl" id="ENST00000296351.8">
    <molecule id="P08582-2"/>
    <property type="protein sequence ID" value="ENSP00000296351.4"/>
    <property type="gene ID" value="ENSG00000163975.14"/>
</dbReference>
<dbReference type="GeneID" id="4241"/>
<dbReference type="KEGG" id="hsa:4241"/>
<dbReference type="MANE-Select" id="ENST00000296350.10">
    <property type="protein sequence ID" value="ENSP00000296350.5"/>
    <property type="RefSeq nucleotide sequence ID" value="NM_005929.6"/>
    <property type="RefSeq protein sequence ID" value="NP_005920.2"/>
</dbReference>
<dbReference type="UCSC" id="uc003fxk.5">
    <molecule id="P08582-1"/>
    <property type="organism name" value="human"/>
</dbReference>
<dbReference type="AGR" id="HGNC:7037"/>
<dbReference type="CTD" id="4241"/>
<dbReference type="DisGeNET" id="4241"/>
<dbReference type="GeneCards" id="MELTF"/>
<dbReference type="HGNC" id="HGNC:7037">
    <property type="gene designation" value="MELTF"/>
</dbReference>
<dbReference type="HPA" id="ENSG00000163975">
    <property type="expression patterns" value="Tissue enhanced (kidney, salivary gland)"/>
</dbReference>
<dbReference type="MIM" id="155750">
    <property type="type" value="gene"/>
</dbReference>
<dbReference type="neXtProt" id="NX_P08582"/>
<dbReference type="OpenTargets" id="ENSG00000163975"/>
<dbReference type="PharmGKB" id="PA30774"/>
<dbReference type="VEuPathDB" id="HostDB:ENSG00000163975"/>
<dbReference type="eggNOG" id="ENOG502QSZB">
    <property type="taxonomic scope" value="Eukaryota"/>
</dbReference>
<dbReference type="GeneTree" id="ENSGT00940000159265"/>
<dbReference type="HOGENOM" id="CLU_011309_3_0_1"/>
<dbReference type="InParanoid" id="P08582"/>
<dbReference type="OMA" id="CPVPAMT"/>
<dbReference type="OrthoDB" id="9981115at2759"/>
<dbReference type="PAN-GO" id="P08582">
    <property type="GO annotations" value="5 GO annotations based on evolutionary models"/>
</dbReference>
<dbReference type="PhylomeDB" id="P08582"/>
<dbReference type="TreeFam" id="TF324013"/>
<dbReference type="PathwayCommons" id="P08582"/>
<dbReference type="Reactome" id="R-HSA-163125">
    <property type="pathway name" value="Post-translational modification: synthesis of GPI-anchored proteins"/>
</dbReference>
<dbReference type="Reactome" id="R-HSA-381426">
    <property type="pathway name" value="Regulation of Insulin-like Growth Factor (IGF) transport and uptake by Insulin-like Growth Factor Binding Proteins (IGFBPs)"/>
</dbReference>
<dbReference type="Reactome" id="R-HSA-8957275">
    <property type="pathway name" value="Post-translational protein phosphorylation"/>
</dbReference>
<dbReference type="SignaLink" id="P08582"/>
<dbReference type="BioGRID-ORCS" id="4241">
    <property type="hits" value="12 hits in 1138 CRISPR screens"/>
</dbReference>
<dbReference type="ChiTaRS" id="MELTF">
    <property type="organism name" value="human"/>
</dbReference>
<dbReference type="GeneWiki" id="Melanotransferrin"/>
<dbReference type="GenomeRNAi" id="4241"/>
<dbReference type="Pharos" id="P08582">
    <property type="development level" value="Tbio"/>
</dbReference>
<dbReference type="PRO" id="PR:P08582"/>
<dbReference type="Proteomes" id="UP000005640">
    <property type="component" value="Chromosome 3"/>
</dbReference>
<dbReference type="RNAct" id="P08582">
    <property type="molecule type" value="protein"/>
</dbReference>
<dbReference type="Bgee" id="ENSG00000163975">
    <property type="expression patterns" value="Expressed in tibia and 149 other cell types or tissues"/>
</dbReference>
<dbReference type="ExpressionAtlas" id="P08582">
    <property type="expression patterns" value="baseline and differential"/>
</dbReference>
<dbReference type="GO" id="GO:0009986">
    <property type="term" value="C:cell surface"/>
    <property type="evidence" value="ECO:0000314"/>
    <property type="project" value="UniProtKB"/>
</dbReference>
<dbReference type="GO" id="GO:0005769">
    <property type="term" value="C:early endosome"/>
    <property type="evidence" value="ECO:0000318"/>
    <property type="project" value="GO_Central"/>
</dbReference>
<dbReference type="GO" id="GO:0005788">
    <property type="term" value="C:endoplasmic reticulum lumen"/>
    <property type="evidence" value="ECO:0000304"/>
    <property type="project" value="Reactome"/>
</dbReference>
<dbReference type="GO" id="GO:0070062">
    <property type="term" value="C:extracellular exosome"/>
    <property type="evidence" value="ECO:0007005"/>
    <property type="project" value="UniProtKB"/>
</dbReference>
<dbReference type="GO" id="GO:0005576">
    <property type="term" value="C:extracellular region"/>
    <property type="evidence" value="ECO:0000304"/>
    <property type="project" value="Reactome"/>
</dbReference>
<dbReference type="GO" id="GO:0005615">
    <property type="term" value="C:extracellular space"/>
    <property type="evidence" value="ECO:0000318"/>
    <property type="project" value="GO_Central"/>
</dbReference>
<dbReference type="GO" id="GO:0005886">
    <property type="term" value="C:plasma membrane"/>
    <property type="evidence" value="ECO:0000314"/>
    <property type="project" value="UniProtKB"/>
</dbReference>
<dbReference type="GO" id="GO:0055037">
    <property type="term" value="C:recycling endosome"/>
    <property type="evidence" value="ECO:0000318"/>
    <property type="project" value="GO_Central"/>
</dbReference>
<dbReference type="GO" id="GO:0098552">
    <property type="term" value="C:side of membrane"/>
    <property type="evidence" value="ECO:0007669"/>
    <property type="project" value="UniProtKB-KW"/>
</dbReference>
<dbReference type="GO" id="GO:0005506">
    <property type="term" value="F:iron ion binding"/>
    <property type="evidence" value="ECO:0000315"/>
    <property type="project" value="UniProtKB"/>
</dbReference>
<dbReference type="GO" id="GO:0006826">
    <property type="term" value="P:iron ion transport"/>
    <property type="evidence" value="ECO:0000315"/>
    <property type="project" value="UniProtKB"/>
</dbReference>
<dbReference type="GO" id="GO:1900025">
    <property type="term" value="P:negative regulation of substrate adhesion-dependent cell spreading"/>
    <property type="evidence" value="ECO:0000314"/>
    <property type="project" value="UniProtKB"/>
</dbReference>
<dbReference type="GO" id="GO:0090091">
    <property type="term" value="P:positive regulation of extracellular matrix disassembly"/>
    <property type="evidence" value="ECO:0000314"/>
    <property type="project" value="UniProtKB"/>
</dbReference>
<dbReference type="GO" id="GO:0010756">
    <property type="term" value="P:positive regulation of plasminogen activation"/>
    <property type="evidence" value="ECO:0000314"/>
    <property type="project" value="UniProtKB"/>
</dbReference>
<dbReference type="CDD" id="cd13529">
    <property type="entry name" value="PBP2_transferrin"/>
    <property type="match status" value="2"/>
</dbReference>
<dbReference type="FunFam" id="3.40.190.10:FF:000108">
    <property type="entry name" value="melanotransferrin"/>
    <property type="match status" value="2"/>
</dbReference>
<dbReference type="Gene3D" id="3.40.190.10">
    <property type="entry name" value="Periplasmic binding protein-like II"/>
    <property type="match status" value="4"/>
</dbReference>
<dbReference type="InterPro" id="IPR016357">
    <property type="entry name" value="Transferrin"/>
</dbReference>
<dbReference type="InterPro" id="IPR001156">
    <property type="entry name" value="Transferrin-like_dom"/>
</dbReference>
<dbReference type="InterPro" id="IPR018195">
    <property type="entry name" value="Transferrin_Fe_BS"/>
</dbReference>
<dbReference type="PANTHER" id="PTHR11485:SF21">
    <property type="entry name" value="MELANOTRANSFERRIN"/>
    <property type="match status" value="1"/>
</dbReference>
<dbReference type="PANTHER" id="PTHR11485">
    <property type="entry name" value="TRANSFERRIN"/>
    <property type="match status" value="1"/>
</dbReference>
<dbReference type="Pfam" id="PF00405">
    <property type="entry name" value="Transferrin"/>
    <property type="match status" value="2"/>
</dbReference>
<dbReference type="PIRSF" id="PIRSF002549">
    <property type="entry name" value="Transferrin"/>
    <property type="match status" value="1"/>
</dbReference>
<dbReference type="PRINTS" id="PR00422">
    <property type="entry name" value="TRANSFERRIN"/>
</dbReference>
<dbReference type="SMART" id="SM00094">
    <property type="entry name" value="TR_FER"/>
    <property type="match status" value="2"/>
</dbReference>
<dbReference type="SUPFAM" id="SSF53850">
    <property type="entry name" value="Periplasmic binding protein-like II"/>
    <property type="match status" value="2"/>
</dbReference>
<dbReference type="PROSITE" id="PS00205">
    <property type="entry name" value="TRANSFERRIN_LIKE_1"/>
    <property type="match status" value="2"/>
</dbReference>
<dbReference type="PROSITE" id="PS00206">
    <property type="entry name" value="TRANSFERRIN_LIKE_2"/>
    <property type="match status" value="2"/>
</dbReference>
<dbReference type="PROSITE" id="PS00207">
    <property type="entry name" value="TRANSFERRIN_LIKE_3"/>
    <property type="match status" value="2"/>
</dbReference>
<dbReference type="PROSITE" id="PS51408">
    <property type="entry name" value="TRANSFERRIN_LIKE_4"/>
    <property type="match status" value="2"/>
</dbReference>
<sequence length="738" mass="80215">MRGPSGALWLLLALRTVLGGMEVRWCATSDPEQHKCGNMSEAFREAGIQPSLLCVRGTSADHCVQLIAAQEADAITLDGGAIYEAGKEHGLKPVVGEVYDQEVGTSYYAVAVVRRSSHVTIDTLKGVKSCHTGINRTVGWNVPVGYLVESGRLSVMGCDVLKAVSDYFGGSCVPGAGETSYSESLCRLCRGDSSGEGVCDKSPLERYYDYSGAFRCLAEGAGDVAFVKHSTVLENTDGKTLPSWGQALLSQDFELLCRDGSRADVTEWRQCHLARVPAHAVVVRADTDGGLIFRLLNEGQRLFSHEGSSFQMFSSEAYGQKDLLFKDSTSELVPIATQTYEAWLGHEYLHAMKGLLCDPNRLPPYLRWCVLSTPEIQKCGDMAVAFRRQRLKPEIQCVSAKSPQHCMERIQAEQVDAVTLSGEDIYTAGKTYGLVPAAGEHYAPEDSSNSYYVVAVVRRDSSHAFTLDELRGKRSCHAGFGSPAGWDVPVGALIQRGFIRPKDCDVLTAVSEFFNASCVPVNNPKNYPSSLCALCVGDEQGRNKCVGNSQERYYGYRGAFRCLVENAGDVAFVRHTTVFDNTNGHNSEPWAAELRSEDYELLCPNGARAEVSQFAACNLAQIPPHAVMVRPDTNIFTVYGLLDKAQDLFGDDHNKNGFKMFDSSNYHGQDLLFKDATVRAVPVGEKTTYRGWLGLDYVAALEGMSSQQCSGAAAPAPGAPLLPLLLPALAARLLPPAL</sequence>